<proteinExistence type="evidence at transcript level"/>
<comment type="catalytic activity">
    <reaction>
        <text>Endohydrolysis of (1-&gt;4)-beta-D-glucosidic linkages in cellulose, lichenin and cereal beta-D-glucans.</text>
        <dbReference type="EC" id="3.2.1.4"/>
    </reaction>
</comment>
<comment type="subcellular location">
    <subcellularLocation>
        <location evidence="1">Secreted</location>
    </subcellularLocation>
</comment>
<comment type="tissue specificity">
    <text evidence="7">Expressed in roots and flowers.</text>
</comment>
<comment type="similarity">
    <text evidence="5 8">Belongs to the glycosyl hydrolase 9 (cellulase E) family.</text>
</comment>
<accession>Q0J930</accession>
<accession>B7F5B2</accession>
<accession>Q259H9</accession>
<accession>Q7XQ92</accession>
<organism>
    <name type="scientific">Oryza sativa subsp. japonica</name>
    <name type="common">Rice</name>
    <dbReference type="NCBI Taxonomy" id="39947"/>
    <lineage>
        <taxon>Eukaryota</taxon>
        <taxon>Viridiplantae</taxon>
        <taxon>Streptophyta</taxon>
        <taxon>Embryophyta</taxon>
        <taxon>Tracheophyta</taxon>
        <taxon>Spermatophyta</taxon>
        <taxon>Magnoliopsida</taxon>
        <taxon>Liliopsida</taxon>
        <taxon>Poales</taxon>
        <taxon>Poaceae</taxon>
        <taxon>BOP clade</taxon>
        <taxon>Oryzoideae</taxon>
        <taxon>Oryzeae</taxon>
        <taxon>Oryzinae</taxon>
        <taxon>Oryza</taxon>
        <taxon>Oryza sativa</taxon>
    </lineage>
</organism>
<reference key="1">
    <citation type="journal article" date="2002" name="Nature">
        <title>Sequence and analysis of rice chromosome 4.</title>
        <authorList>
            <person name="Feng Q."/>
            <person name="Zhang Y."/>
            <person name="Hao P."/>
            <person name="Wang S."/>
            <person name="Fu G."/>
            <person name="Huang Y."/>
            <person name="Li Y."/>
            <person name="Zhu J."/>
            <person name="Liu Y."/>
            <person name="Hu X."/>
            <person name="Jia P."/>
            <person name="Zhang Y."/>
            <person name="Zhao Q."/>
            <person name="Ying K."/>
            <person name="Yu S."/>
            <person name="Tang Y."/>
            <person name="Weng Q."/>
            <person name="Zhang L."/>
            <person name="Lu Y."/>
            <person name="Mu J."/>
            <person name="Lu Y."/>
            <person name="Zhang L.S."/>
            <person name="Yu Z."/>
            <person name="Fan D."/>
            <person name="Liu X."/>
            <person name="Lu T."/>
            <person name="Li C."/>
            <person name="Wu Y."/>
            <person name="Sun T."/>
            <person name="Lei H."/>
            <person name="Li T."/>
            <person name="Hu H."/>
            <person name="Guan J."/>
            <person name="Wu M."/>
            <person name="Zhang R."/>
            <person name="Zhou B."/>
            <person name="Chen Z."/>
            <person name="Chen L."/>
            <person name="Jin Z."/>
            <person name="Wang R."/>
            <person name="Yin H."/>
            <person name="Cai Z."/>
            <person name="Ren S."/>
            <person name="Lv G."/>
            <person name="Gu W."/>
            <person name="Zhu G."/>
            <person name="Tu Y."/>
            <person name="Jia J."/>
            <person name="Zhang Y."/>
            <person name="Chen J."/>
            <person name="Kang H."/>
            <person name="Chen X."/>
            <person name="Shao C."/>
            <person name="Sun Y."/>
            <person name="Hu Q."/>
            <person name="Zhang X."/>
            <person name="Zhang W."/>
            <person name="Wang L."/>
            <person name="Ding C."/>
            <person name="Sheng H."/>
            <person name="Gu J."/>
            <person name="Chen S."/>
            <person name="Ni L."/>
            <person name="Zhu F."/>
            <person name="Chen W."/>
            <person name="Lan L."/>
            <person name="Lai Y."/>
            <person name="Cheng Z."/>
            <person name="Gu M."/>
            <person name="Jiang J."/>
            <person name="Li J."/>
            <person name="Hong G."/>
            <person name="Xue Y."/>
            <person name="Han B."/>
        </authorList>
    </citation>
    <scope>NUCLEOTIDE SEQUENCE [LARGE SCALE GENOMIC DNA]</scope>
    <source>
        <strain>cv. Nipponbare</strain>
    </source>
</reference>
<reference key="2">
    <citation type="journal article" date="2005" name="Nature">
        <title>The map-based sequence of the rice genome.</title>
        <authorList>
            <consortium name="International rice genome sequencing project (IRGSP)"/>
        </authorList>
    </citation>
    <scope>NUCLEOTIDE SEQUENCE [LARGE SCALE GENOMIC DNA]</scope>
    <source>
        <strain>cv. Nipponbare</strain>
    </source>
</reference>
<reference key="3">
    <citation type="journal article" date="2008" name="Nucleic Acids Res.">
        <title>The rice annotation project database (RAP-DB): 2008 update.</title>
        <authorList>
            <consortium name="The rice annotation project (RAP)"/>
        </authorList>
    </citation>
    <scope>GENOME REANNOTATION</scope>
    <source>
        <strain>cv. Nipponbare</strain>
    </source>
</reference>
<reference key="4">
    <citation type="journal article" date="2013" name="Rice">
        <title>Improvement of the Oryza sativa Nipponbare reference genome using next generation sequence and optical map data.</title>
        <authorList>
            <person name="Kawahara Y."/>
            <person name="de la Bastide M."/>
            <person name="Hamilton J.P."/>
            <person name="Kanamori H."/>
            <person name="McCombie W.R."/>
            <person name="Ouyang S."/>
            <person name="Schwartz D.C."/>
            <person name="Tanaka T."/>
            <person name="Wu J."/>
            <person name="Zhou S."/>
            <person name="Childs K.L."/>
            <person name="Davidson R.M."/>
            <person name="Lin H."/>
            <person name="Quesada-Ocampo L."/>
            <person name="Vaillancourt B."/>
            <person name="Sakai H."/>
            <person name="Lee S.S."/>
            <person name="Kim J."/>
            <person name="Numa H."/>
            <person name="Itoh T."/>
            <person name="Buell C.R."/>
            <person name="Matsumoto T."/>
        </authorList>
    </citation>
    <scope>GENOME REANNOTATION</scope>
    <source>
        <strain>cv. Nipponbare</strain>
    </source>
</reference>
<reference key="5">
    <citation type="journal article" date="2003" name="Science">
        <title>Collection, mapping, and annotation of over 28,000 cDNA clones from japonica rice.</title>
        <authorList>
            <consortium name="The rice full-length cDNA consortium"/>
        </authorList>
    </citation>
    <scope>NUCLEOTIDE SEQUENCE [LARGE SCALE MRNA]</scope>
    <source>
        <strain>cv. Nipponbare</strain>
    </source>
</reference>
<reference key="6">
    <citation type="journal article" date="2006" name="Plant Mol. Biol.">
        <title>OsGLU1, a putative membrane-bound endo-1,4-beta-D-glucanase from rice, affects plant internode elongation.</title>
        <authorList>
            <person name="Zhou H.-L."/>
            <person name="He S.-J."/>
            <person name="Cao Y.-R."/>
            <person name="Chen T."/>
            <person name="Du B.-X."/>
            <person name="Chu C.-C."/>
            <person name="Zhang J.-S."/>
            <person name="Chen S.-Y."/>
        </authorList>
    </citation>
    <scope>TISSUE SPECIFICITY</scope>
</reference>
<gene>
    <name type="primary">GLU6</name>
    <name type="ordered locus">Os04g0674800</name>
    <name type="ordered locus">LOC_Os04g57860</name>
    <name type="ORF">OSJNBa0018M05.16</name>
</gene>
<dbReference type="EC" id="3.2.1.4"/>
<dbReference type="EMBL" id="AL606457">
    <property type="protein sequence ID" value="CAE03241.2"/>
    <property type="molecule type" value="Genomic_DNA"/>
</dbReference>
<dbReference type="EMBL" id="AP008210">
    <property type="protein sequence ID" value="BAF16157.1"/>
    <property type="molecule type" value="Genomic_DNA"/>
</dbReference>
<dbReference type="EMBL" id="AP014960">
    <property type="protein sequence ID" value="BAS91608.1"/>
    <property type="molecule type" value="Genomic_DNA"/>
</dbReference>
<dbReference type="EMBL" id="AK119913">
    <property type="protein sequence ID" value="BAG99809.1"/>
    <property type="molecule type" value="mRNA"/>
</dbReference>
<dbReference type="RefSeq" id="XP_015634039.1">
    <property type="nucleotide sequence ID" value="XM_015778553.1"/>
</dbReference>
<dbReference type="SMR" id="Q0J930"/>
<dbReference type="FunCoup" id="Q0J930">
    <property type="interactions" value="152"/>
</dbReference>
<dbReference type="STRING" id="39947.Q0J930"/>
<dbReference type="CAZy" id="CBM49">
    <property type="family name" value="Carbohydrate-Binding Module Family 49"/>
</dbReference>
<dbReference type="CAZy" id="GH9">
    <property type="family name" value="Glycoside Hydrolase Family 9"/>
</dbReference>
<dbReference type="GlyCosmos" id="Q0J930">
    <property type="glycosylation" value="1 site, No reported glycans"/>
</dbReference>
<dbReference type="PaxDb" id="39947-Q0J930"/>
<dbReference type="EnsemblPlants" id="Os04t0674800-01">
    <property type="protein sequence ID" value="Os04t0674800-01"/>
    <property type="gene ID" value="Os04g0674800"/>
</dbReference>
<dbReference type="Gramene" id="Os04t0674800-01">
    <property type="protein sequence ID" value="Os04t0674800-01"/>
    <property type="gene ID" value="Os04g0674800"/>
</dbReference>
<dbReference type="KEGG" id="dosa:Os04g0674800"/>
<dbReference type="eggNOG" id="ENOG502QRF6">
    <property type="taxonomic scope" value="Eukaryota"/>
</dbReference>
<dbReference type="HOGENOM" id="CLU_008926_1_4_1"/>
<dbReference type="InParanoid" id="Q0J930"/>
<dbReference type="OMA" id="NATVGCM"/>
<dbReference type="OrthoDB" id="10257085at2759"/>
<dbReference type="Proteomes" id="UP000000763">
    <property type="component" value="Chromosome 4"/>
</dbReference>
<dbReference type="Proteomes" id="UP000059680">
    <property type="component" value="Chromosome 4"/>
</dbReference>
<dbReference type="GO" id="GO:0005576">
    <property type="term" value="C:extracellular region"/>
    <property type="evidence" value="ECO:0007669"/>
    <property type="project" value="UniProtKB-SubCell"/>
</dbReference>
<dbReference type="GO" id="GO:0030246">
    <property type="term" value="F:carbohydrate binding"/>
    <property type="evidence" value="ECO:0007669"/>
    <property type="project" value="InterPro"/>
</dbReference>
<dbReference type="GO" id="GO:0008810">
    <property type="term" value="F:cellulase activity"/>
    <property type="evidence" value="ECO:0007669"/>
    <property type="project" value="UniProtKB-EC"/>
</dbReference>
<dbReference type="GO" id="GO:0030245">
    <property type="term" value="P:cellulose catabolic process"/>
    <property type="evidence" value="ECO:0007669"/>
    <property type="project" value="UniProtKB-KW"/>
</dbReference>
<dbReference type="FunFam" id="1.50.10.10:FF:000020">
    <property type="entry name" value="Endoglucanase"/>
    <property type="match status" value="1"/>
</dbReference>
<dbReference type="Gene3D" id="1.50.10.10">
    <property type="match status" value="1"/>
</dbReference>
<dbReference type="InterPro" id="IPR008928">
    <property type="entry name" value="6-hairpin_glycosidase_sf"/>
</dbReference>
<dbReference type="InterPro" id="IPR012341">
    <property type="entry name" value="6hp_glycosidase-like_sf"/>
</dbReference>
<dbReference type="InterPro" id="IPR019028">
    <property type="entry name" value="CBM_49"/>
</dbReference>
<dbReference type="InterPro" id="IPR001701">
    <property type="entry name" value="Glyco_hydro_9"/>
</dbReference>
<dbReference type="InterPro" id="IPR033126">
    <property type="entry name" value="Glyco_hydro_9_Asp/Glu_AS"/>
</dbReference>
<dbReference type="InterPro" id="IPR018221">
    <property type="entry name" value="Glyco_hydro_9_His_AS"/>
</dbReference>
<dbReference type="PANTHER" id="PTHR22298">
    <property type="entry name" value="ENDO-1,4-BETA-GLUCANASE"/>
    <property type="match status" value="1"/>
</dbReference>
<dbReference type="Pfam" id="PF09478">
    <property type="entry name" value="CBM49"/>
    <property type="match status" value="1"/>
</dbReference>
<dbReference type="Pfam" id="PF00759">
    <property type="entry name" value="Glyco_hydro_9"/>
    <property type="match status" value="1"/>
</dbReference>
<dbReference type="SMART" id="SM01063">
    <property type="entry name" value="CBM49"/>
    <property type="match status" value="1"/>
</dbReference>
<dbReference type="SUPFAM" id="SSF48208">
    <property type="entry name" value="Six-hairpin glycosidases"/>
    <property type="match status" value="1"/>
</dbReference>
<dbReference type="PROSITE" id="PS60032">
    <property type="entry name" value="GH9_1"/>
    <property type="match status" value="1"/>
</dbReference>
<dbReference type="PROSITE" id="PS00592">
    <property type="entry name" value="GH9_2"/>
    <property type="match status" value="1"/>
</dbReference>
<dbReference type="PROSITE" id="PS00698">
    <property type="entry name" value="GH9_3"/>
    <property type="match status" value="1"/>
</dbReference>
<sequence length="625" mass="68454">MAATMNKTPATTFLLIPAAASLVLLLAAAASVEASAFDYAGAFDKCLLFFEAQRSGKLPDDRLVRWRGDSALTDGFSQGVDLVGGYYDSGDHVKFGLPMAYAVTMLSWGVVEFEKEMVDGNKLHRVLDAIRWGTNYFVKAHTQHNALWVQVGDGDSDHLCWERAEDMSTPRTAFKIDINNPGSEVAGETAAALAAAAKAFKPYDRMYSDLLLLHSKQLFTFADTFRGKYDDSLQSAKKFYPSASGYQDELLWAAAWLYEATGDEQYLRYVSQNAEAFGGTGWAVTEFSWDNKYAGLQVLLSKVLFEQGGSAAGYADTLKQYQAKAEFFLCACLQKNNGHNVKMTPGGLMYVSDWSNMQYVSSSAFLLTVYADYLAESRGTLRCPDGEVKPAEILRFARSQVDYVLGKNPKGMSYMVGYGSYYPTHVHHRGASIPSIYAMNATVGCMESFDKYYNSKNADPNVLHGALVGGPDANDAYDDDRCNYQHAEPTLAGNAPMSGVFARLAASPADNTPEYTPAPNAPSPSNGGSPLEFVHTVTNTWKANGVDYYRHVVTAKNTCGHAITYLKLQIKELSGEIYGVSRTNAKDMYEFPSWMTRLDAGAQLTIVYIQGGPAAKIAVVEYKTA</sequence>
<evidence type="ECO:0000250" key="1"/>
<evidence type="ECO:0000255" key="2"/>
<evidence type="ECO:0000255" key="3">
    <source>
        <dbReference type="PROSITE-ProRule" id="PRU10059"/>
    </source>
</evidence>
<evidence type="ECO:0000255" key="4">
    <source>
        <dbReference type="PROSITE-ProRule" id="PRU10060"/>
    </source>
</evidence>
<evidence type="ECO:0000255" key="5">
    <source>
        <dbReference type="PROSITE-ProRule" id="PRU10140"/>
    </source>
</evidence>
<evidence type="ECO:0000256" key="6">
    <source>
        <dbReference type="SAM" id="MobiDB-lite"/>
    </source>
</evidence>
<evidence type="ECO:0000269" key="7">
    <source>
    </source>
</evidence>
<evidence type="ECO:0000305" key="8"/>
<feature type="signal peptide" evidence="2">
    <location>
        <begin position="1"/>
        <end position="34"/>
    </location>
</feature>
<feature type="chain" id="PRO_0000249290" description="Endoglucanase 13">
    <location>
        <begin position="35"/>
        <end position="625"/>
    </location>
</feature>
<feature type="region of interest" description="Disordered" evidence="6">
    <location>
        <begin position="509"/>
        <end position="530"/>
    </location>
</feature>
<feature type="active site" description="Nucleophile" evidence="5">
    <location>
        <position position="91"/>
    </location>
</feature>
<feature type="active site" evidence="3">
    <location>
        <position position="427"/>
    </location>
</feature>
<feature type="active site" evidence="4">
    <location>
        <position position="479"/>
    </location>
</feature>
<feature type="active site" evidence="4">
    <location>
        <position position="488"/>
    </location>
</feature>
<feature type="glycosylation site" description="N-linked (GlcNAc...) asparagine" evidence="2">
    <location>
        <position position="440"/>
    </location>
</feature>
<protein>
    <recommendedName>
        <fullName>Endoglucanase 13</fullName>
        <ecNumber>3.2.1.4</ecNumber>
    </recommendedName>
    <alternativeName>
        <fullName>Endo-1,4-beta glucanase 13</fullName>
    </alternativeName>
    <alternativeName>
        <fullName>OsGLU6</fullName>
    </alternativeName>
</protein>
<name>GUN13_ORYSJ</name>
<keyword id="KW-0119">Carbohydrate metabolism</keyword>
<keyword id="KW-0136">Cellulose degradation</keyword>
<keyword id="KW-0325">Glycoprotein</keyword>
<keyword id="KW-0326">Glycosidase</keyword>
<keyword id="KW-0378">Hydrolase</keyword>
<keyword id="KW-0624">Polysaccharide degradation</keyword>
<keyword id="KW-1185">Reference proteome</keyword>
<keyword id="KW-0964">Secreted</keyword>
<keyword id="KW-0732">Signal</keyword>